<feature type="transit peptide" description="Chloroplast" evidence="1 2">
    <location>
        <begin position="1"/>
        <end position="86"/>
    </location>
</feature>
<feature type="chain" id="PRO_0000030524" description="Large ribosomal subunit protein bL35c">
    <location>
        <begin position="87"/>
        <end position="159"/>
    </location>
</feature>
<feature type="helix" evidence="9">
    <location>
        <begin position="96"/>
        <end position="99"/>
    </location>
</feature>
<feature type="strand" evidence="10">
    <location>
        <begin position="102"/>
        <end position="104"/>
    </location>
</feature>
<feature type="strand" evidence="10">
    <location>
        <begin position="106"/>
        <end position="108"/>
    </location>
</feature>
<feature type="strand" evidence="9">
    <location>
        <begin position="110"/>
        <end position="112"/>
    </location>
</feature>
<feature type="strand" evidence="10">
    <location>
        <begin position="122"/>
        <end position="124"/>
    </location>
</feature>
<feature type="helix" evidence="9">
    <location>
        <begin position="126"/>
        <end position="131"/>
    </location>
</feature>
<feature type="strand" evidence="10">
    <location>
        <begin position="134"/>
        <end position="137"/>
    </location>
</feature>
<feature type="helix" evidence="9">
    <location>
        <begin position="140"/>
        <end position="142"/>
    </location>
</feature>
<feature type="helix" evidence="9">
    <location>
        <begin position="143"/>
        <end position="149"/>
    </location>
</feature>
<protein>
    <recommendedName>
        <fullName evidence="5">Large ribosomal subunit protein bL35c</fullName>
    </recommendedName>
    <alternativeName>
        <fullName evidence="4">50S ribosomal protein L35, chloroplastic</fullName>
    </alternativeName>
    <alternativeName>
        <fullName>CL35</fullName>
    </alternativeName>
</protein>
<sequence>MAMASATATLSFKTPSLSLSPPSTRCSAAQGISLTHFNKQLKSTLNLSSSSSISSSKVQPIVLKNKRISTVDSSVSTSSPSFTVFAAKGYKMKTHKASAKRFRVTGKGKIVRRRAGKQHLLAKKNTKRKNRLSKLIQVDRSDYDNVIGALPYLKVNRKV</sequence>
<keyword id="KW-0002">3D-structure</keyword>
<keyword id="KW-0150">Chloroplast</keyword>
<keyword id="KW-0903">Direct protein sequencing</keyword>
<keyword id="KW-0934">Plastid</keyword>
<keyword id="KW-1185">Reference proteome</keyword>
<keyword id="KW-0687">Ribonucleoprotein</keyword>
<keyword id="KW-0689">Ribosomal protein</keyword>
<keyword id="KW-0809">Transit peptide</keyword>
<comment type="function">
    <text evidence="7 8">Component of the chloroplast ribosome (chloro-ribosome), a dedicated translation machinery responsible for the synthesis of chloroplast genome-encoded proteins, including proteins of the transcription and translation machinery and components of the photosynthetic apparatus.</text>
</comment>
<comment type="subunit">
    <text evidence="1 3">Component of the chloroplast large ribosomal subunit (LSU). Mature 70S chloroplast ribosomes of higher plants consist of a small (30S) and a large (50S) subunit. The 30S small subunit contains 1 molecule of ribosomal RNA (16S rRNA) and 24 different proteins. The 50S large subunit contains 3 rRNA molecules (23S, 5S and 4.5S rRNA) and 33 different proteins.</text>
</comment>
<comment type="subcellular location">
    <subcellularLocation>
        <location evidence="1 3">Plastid</location>
        <location evidence="1 3">Chloroplast</location>
    </subcellularLocation>
</comment>
<comment type="mass spectrometry"/>
<comment type="similarity">
    <text evidence="6">Belongs to the bacterial ribosomal protein bL35 family.</text>
</comment>
<accession>P23326</accession>
<accession>A0A0K9RCY8</accession>
<proteinExistence type="evidence at protein level"/>
<dbReference type="EMBL" id="M60449">
    <property type="protein sequence ID" value="AAA34043.1"/>
    <property type="molecule type" value="mRNA"/>
</dbReference>
<dbReference type="EMBL" id="KQ144065">
    <property type="protein sequence ID" value="KNA17358.1"/>
    <property type="molecule type" value="Genomic_DNA"/>
</dbReference>
<dbReference type="PIR" id="A36107">
    <property type="entry name" value="A36107"/>
</dbReference>
<dbReference type="PDB" id="4V61">
    <property type="method" value="EM"/>
    <property type="resolution" value="9.40 A"/>
    <property type="chains" value="B5=1-159"/>
</dbReference>
<dbReference type="PDB" id="5H1S">
    <property type="method" value="EM"/>
    <property type="resolution" value="3.50 A"/>
    <property type="chains" value="e=87-159"/>
</dbReference>
<dbReference type="PDB" id="5MLC">
    <property type="method" value="EM"/>
    <property type="resolution" value="3.90 A"/>
    <property type="chains" value="5=1-159"/>
</dbReference>
<dbReference type="PDB" id="5MMI">
    <property type="method" value="EM"/>
    <property type="resolution" value="3.25 A"/>
    <property type="chains" value="4=1-159"/>
</dbReference>
<dbReference type="PDB" id="5MMM">
    <property type="method" value="EM"/>
    <property type="resolution" value="3.40 A"/>
    <property type="chains" value="4=1-159"/>
</dbReference>
<dbReference type="PDB" id="5X8P">
    <property type="method" value="EM"/>
    <property type="resolution" value="3.40 A"/>
    <property type="chains" value="4=87-159"/>
</dbReference>
<dbReference type="PDB" id="5X8T">
    <property type="method" value="EM"/>
    <property type="resolution" value="3.30 A"/>
    <property type="chains" value="4=87-159"/>
</dbReference>
<dbReference type="PDB" id="6ERI">
    <property type="method" value="EM"/>
    <property type="resolution" value="3.00 A"/>
    <property type="chains" value="Ad=88-159"/>
</dbReference>
<dbReference type="PDBsum" id="4V61"/>
<dbReference type="PDBsum" id="5H1S"/>
<dbReference type="PDBsum" id="5MLC"/>
<dbReference type="PDBsum" id="5MMI"/>
<dbReference type="PDBsum" id="5MMM"/>
<dbReference type="PDBsum" id="5X8P"/>
<dbReference type="PDBsum" id="5X8T"/>
<dbReference type="PDBsum" id="6ERI"/>
<dbReference type="EMDB" id="EMD-3525"/>
<dbReference type="EMDB" id="EMD-3531"/>
<dbReference type="EMDB" id="EMD-3533"/>
<dbReference type="EMDB" id="EMD-3941"/>
<dbReference type="EMDB" id="EMD-6709"/>
<dbReference type="EMDB" id="EMD-6711"/>
<dbReference type="EMDB" id="EMD-9572"/>
<dbReference type="SMR" id="P23326"/>
<dbReference type="IntAct" id="P23326">
    <property type="interactions" value="1"/>
</dbReference>
<dbReference type="STRING" id="3562.P23326"/>
<dbReference type="OrthoDB" id="162638at2759"/>
<dbReference type="Proteomes" id="UP001155700">
    <property type="component" value="Unplaced"/>
</dbReference>
<dbReference type="GO" id="GO:0009507">
    <property type="term" value="C:chloroplast"/>
    <property type="evidence" value="ECO:0007669"/>
    <property type="project" value="UniProtKB-SubCell"/>
</dbReference>
<dbReference type="GO" id="GO:0015934">
    <property type="term" value="C:large ribosomal subunit"/>
    <property type="evidence" value="ECO:0000318"/>
    <property type="project" value="GO_Central"/>
</dbReference>
<dbReference type="GO" id="GO:0003735">
    <property type="term" value="F:structural constituent of ribosome"/>
    <property type="evidence" value="ECO:0000318"/>
    <property type="project" value="GO_Central"/>
</dbReference>
<dbReference type="GO" id="GO:0006412">
    <property type="term" value="P:translation"/>
    <property type="evidence" value="ECO:0007669"/>
    <property type="project" value="InterPro"/>
</dbReference>
<dbReference type="FunFam" id="4.10.410.60:FF:000001">
    <property type="entry name" value="50S ribosomal protein L35"/>
    <property type="match status" value="1"/>
</dbReference>
<dbReference type="Gene3D" id="4.10.410.60">
    <property type="match status" value="1"/>
</dbReference>
<dbReference type="HAMAP" id="MF_00514">
    <property type="entry name" value="Ribosomal_bL35"/>
    <property type="match status" value="1"/>
</dbReference>
<dbReference type="InterPro" id="IPR001706">
    <property type="entry name" value="Ribosomal_bL35"/>
</dbReference>
<dbReference type="InterPro" id="IPR021137">
    <property type="entry name" value="Ribosomal_bL35-like"/>
</dbReference>
<dbReference type="InterPro" id="IPR018265">
    <property type="entry name" value="Ribosomal_bL35_CS"/>
</dbReference>
<dbReference type="InterPro" id="IPR037229">
    <property type="entry name" value="Ribosomal_bL35_sf"/>
</dbReference>
<dbReference type="NCBIfam" id="TIGR00001">
    <property type="entry name" value="rpmI_bact"/>
    <property type="match status" value="1"/>
</dbReference>
<dbReference type="PANTHER" id="PTHR33343">
    <property type="entry name" value="54S RIBOSOMAL PROTEIN BL35M"/>
    <property type="match status" value="1"/>
</dbReference>
<dbReference type="PANTHER" id="PTHR33343:SF1">
    <property type="entry name" value="LARGE RIBOSOMAL SUBUNIT PROTEIN BL35M"/>
    <property type="match status" value="1"/>
</dbReference>
<dbReference type="Pfam" id="PF01632">
    <property type="entry name" value="Ribosomal_L35p"/>
    <property type="match status" value="1"/>
</dbReference>
<dbReference type="PRINTS" id="PR00064">
    <property type="entry name" value="RIBOSOMALL35"/>
</dbReference>
<dbReference type="SUPFAM" id="SSF143034">
    <property type="entry name" value="L35p-like"/>
    <property type="match status" value="1"/>
</dbReference>
<dbReference type="PROSITE" id="PS00936">
    <property type="entry name" value="RIBOSOMAL_L35"/>
    <property type="match status" value="1"/>
</dbReference>
<name>RK35_SPIOL</name>
<gene>
    <name type="primary">RPL35</name>
    <name type="ORF">SOVF_080710</name>
</gene>
<evidence type="ECO:0000269" key="1">
    <source>
    </source>
</evidence>
<evidence type="ECO:0000269" key="2">
    <source>
    </source>
</evidence>
<evidence type="ECO:0000269" key="3">
    <source>
    </source>
</evidence>
<evidence type="ECO:0000303" key="4">
    <source>
    </source>
</evidence>
<evidence type="ECO:0000303" key="5">
    <source>
    </source>
</evidence>
<evidence type="ECO:0000305" key="6"/>
<evidence type="ECO:0000305" key="7">
    <source>
    </source>
</evidence>
<evidence type="ECO:0000305" key="8">
    <source>
    </source>
</evidence>
<evidence type="ECO:0007829" key="9">
    <source>
        <dbReference type="PDB" id="5MMI"/>
    </source>
</evidence>
<evidence type="ECO:0007829" key="10">
    <source>
        <dbReference type="PDB" id="5X8T"/>
    </source>
</evidence>
<reference key="1">
    <citation type="journal article" date="1990" name="Biochemistry">
        <title>Ribosomal protein L35: identification in spinach chloroplasts and isolation of a cDNA clone encoding its cytoplasmic precursor.</title>
        <authorList>
            <person name="Smooker P.M."/>
            <person name="Choli T."/>
            <person name="Subramanian A.R."/>
        </authorList>
    </citation>
    <scope>NUCLEOTIDE SEQUENCE [MRNA]</scope>
    <scope>PROTEIN SEQUENCE OF 87-135</scope>
    <source>
        <strain>cv. Alwaro</strain>
    </source>
</reference>
<reference key="2">
    <citation type="journal article" date="1990" name="J. Biol. Chem.">
        <title>A ribosomal protein is encoded in the chloroplast DNA in a lower plant but in the nucleus in angiosperms. Isolation of the spinach L21 protein and cDNA clone with transit and an unusual repeat sequence.</title>
        <authorList>
            <person name="Smooker P.M."/>
            <person name="Kruft V."/>
            <person name="Subramanian A.R."/>
        </authorList>
    </citation>
    <scope>NUCLEOTIDE SEQUENCE [MRNA]</scope>
</reference>
<reference key="3">
    <citation type="journal article" date="2014" name="Nature">
        <title>The genome of the recently domesticated crop plant sugar beet (Beta vulgaris).</title>
        <authorList>
            <person name="Dohm J.C."/>
            <person name="Minoche A.E."/>
            <person name="Holtgraewe D."/>
            <person name="Capella-Gutierrez S."/>
            <person name="Zakrzewski F."/>
            <person name="Tafer H."/>
            <person name="Rupp O."/>
            <person name="Soerensen T.R."/>
            <person name="Stracke R."/>
            <person name="Reinhardt R."/>
            <person name="Goesmann A."/>
            <person name="Kraft T."/>
            <person name="Schulz B."/>
            <person name="Stadler P.F."/>
            <person name="Schmidt T."/>
            <person name="Gabaldon T."/>
            <person name="Lehrach H."/>
            <person name="Weisshaar B."/>
            <person name="Himmelbauer H."/>
        </authorList>
    </citation>
    <scope>NUCLEOTIDE SEQUENCE [LARGE SCALE GENOMIC DNA]</scope>
    <source>
        <strain>cv. Viroflay</strain>
        <tissue>Leaf</tissue>
    </source>
</reference>
<reference key="4">
    <citation type="journal article" date="2000" name="J. Biol. Chem.">
        <title>The plastid ribosomal proteins. Identification of all the proteins in the 50S subunit of an organelle ribosome (chloroplast).</title>
        <authorList>
            <person name="Yamaguchi K."/>
            <person name="Subramanian A.R."/>
        </authorList>
    </citation>
    <scope>PROTEIN SEQUENCE OF 87-94</scope>
    <scope>SUBUNIT</scope>
    <scope>SUBCELLULAR LOCATION</scope>
    <scope>MASS SPECTROMETRY</scope>
    <source>
        <strain>cv. Alwaro</strain>
        <tissue>Leaf</tissue>
    </source>
</reference>
<reference key="5">
    <citation type="journal article" date="2007" name="Proc. Natl. Acad. Sci. U.S.A.">
        <title>Cryo-EM study of the spinach chloroplast ribosome reveals the structural and functional roles of plastid-specific ribosomal proteins.</title>
        <authorList>
            <person name="Sharma M.R."/>
            <person name="Wilson D.N."/>
            <person name="Datta P.P."/>
            <person name="Barat C."/>
            <person name="Schluenzen F."/>
            <person name="Fucini P."/>
            <person name="Agrawal R.K."/>
        </authorList>
    </citation>
    <scope>STRUCTURE BY ELECTRON MICROSCOPY (9.4 ANGSTROMS)</scope>
</reference>
<reference key="6">
    <citation type="journal article" date="2016" name="Sci. Rep.">
        <title>Cryo-EM structure of the large subunit of the spinach chloroplast ribosome.</title>
        <authorList>
            <person name="Ahmed T."/>
            <person name="Yin Z."/>
            <person name="Bhushan S."/>
        </authorList>
    </citation>
    <scope>STRUCTURE BY ELECTRON MICROSCOPY (3.50 ANGSTROMS)</scope>
</reference>
<reference key="7">
    <citation type="journal article" date="2017" name="EMBO J.">
        <title>The complete structure of the chloroplast 70S ribosome in complex with translation factor pY.</title>
        <authorList>
            <person name="Bieri P."/>
            <person name="Leibundgut M."/>
            <person name="Saurer M."/>
            <person name="Boehringer D."/>
            <person name="Ban N."/>
        </authorList>
    </citation>
    <scope>STRUCTURE BY ELECTRON MICROSCOPY (3.25 ANGSTROMS)</scope>
    <scope>SUBUNIT</scope>
    <scope>SUBCELLULAR LOCATION</scope>
</reference>
<organism>
    <name type="scientific">Spinacia oleracea</name>
    <name type="common">Spinach</name>
    <dbReference type="NCBI Taxonomy" id="3562"/>
    <lineage>
        <taxon>Eukaryota</taxon>
        <taxon>Viridiplantae</taxon>
        <taxon>Streptophyta</taxon>
        <taxon>Embryophyta</taxon>
        <taxon>Tracheophyta</taxon>
        <taxon>Spermatophyta</taxon>
        <taxon>Magnoliopsida</taxon>
        <taxon>eudicotyledons</taxon>
        <taxon>Gunneridae</taxon>
        <taxon>Pentapetalae</taxon>
        <taxon>Caryophyllales</taxon>
        <taxon>Chenopodiaceae</taxon>
        <taxon>Chenopodioideae</taxon>
        <taxon>Anserineae</taxon>
        <taxon>Spinacia</taxon>
    </lineage>
</organism>